<evidence type="ECO:0000255" key="1"/>
<evidence type="ECO:0000305" key="2"/>
<evidence type="ECO:0007829" key="3">
    <source>
        <dbReference type="PDB" id="7Q21"/>
    </source>
</evidence>
<evidence type="ECO:0007829" key="4">
    <source>
        <dbReference type="PDB" id="7QHM"/>
    </source>
</evidence>
<feature type="chain" id="PRO_0000214038" description="Uncharacterized membrane protein Cgl2017/cg2211">
    <location>
        <begin position="1"/>
        <end position="147"/>
    </location>
</feature>
<feature type="transmembrane region" description="Helical" evidence="1">
    <location>
        <begin position="35"/>
        <end position="55"/>
    </location>
</feature>
<feature type="transmembrane region" description="Helical" evidence="1">
    <location>
        <begin position="62"/>
        <end position="82"/>
    </location>
</feature>
<feature type="turn" evidence="4">
    <location>
        <begin position="18"/>
        <end position="20"/>
    </location>
</feature>
<feature type="helix" evidence="4">
    <location>
        <begin position="24"/>
        <end position="26"/>
    </location>
</feature>
<feature type="helix" evidence="4">
    <location>
        <begin position="33"/>
        <end position="50"/>
    </location>
</feature>
<feature type="strand" evidence="3">
    <location>
        <begin position="52"/>
        <end position="54"/>
    </location>
</feature>
<feature type="helix" evidence="4">
    <location>
        <begin position="59"/>
        <end position="79"/>
    </location>
</feature>
<feature type="strand" evidence="3">
    <location>
        <begin position="89"/>
        <end position="93"/>
    </location>
</feature>
<feature type="helix" evidence="4">
    <location>
        <begin position="104"/>
        <end position="110"/>
    </location>
</feature>
<feature type="helix" evidence="4">
    <location>
        <begin position="113"/>
        <end position="115"/>
    </location>
</feature>
<feature type="helix" evidence="4">
    <location>
        <begin position="120"/>
        <end position="124"/>
    </location>
</feature>
<feature type="turn" evidence="4">
    <location>
        <begin position="125"/>
        <end position="127"/>
    </location>
</feature>
<feature type="helix" evidence="4">
    <location>
        <begin position="130"/>
        <end position="132"/>
    </location>
</feature>
<feature type="turn" evidence="4">
    <location>
        <begin position="133"/>
        <end position="136"/>
    </location>
</feature>
<protein>
    <recommendedName>
        <fullName>Uncharacterized membrane protein Cgl2017/cg2211</fullName>
        <shortName>P20</shortName>
    </recommendedName>
</protein>
<name>Y2017_CORGL</name>
<reference key="1">
    <citation type="journal article" date="2003" name="Appl. Microbiol. Biotechnol.">
        <title>The Corynebacterium glutamicum genome: features and impacts on biotechnological processes.</title>
        <authorList>
            <person name="Ikeda M."/>
            <person name="Nakagawa S."/>
        </authorList>
    </citation>
    <scope>NUCLEOTIDE SEQUENCE [LARGE SCALE GENOMIC DNA]</scope>
    <source>
        <strain>ATCC 13032 / DSM 20300 / JCM 1318 / BCRC 11384 / CCUG 27702 / LMG 3730 / NBRC 12168 / NCIMB 10025 / NRRL B-2784 / 534</strain>
    </source>
</reference>
<reference key="2">
    <citation type="journal article" date="2003" name="J. Biotechnol.">
        <title>The complete Corynebacterium glutamicum ATCC 13032 genome sequence and its impact on the production of L-aspartate-derived amino acids and vitamins.</title>
        <authorList>
            <person name="Kalinowski J."/>
            <person name="Bathe B."/>
            <person name="Bartels D."/>
            <person name="Bischoff N."/>
            <person name="Bott M."/>
            <person name="Burkovski A."/>
            <person name="Dusch N."/>
            <person name="Eggeling L."/>
            <person name="Eikmanns B.J."/>
            <person name="Gaigalat L."/>
            <person name="Goesmann A."/>
            <person name="Hartmann M."/>
            <person name="Huthmacher K."/>
            <person name="Kraemer R."/>
            <person name="Linke B."/>
            <person name="McHardy A.C."/>
            <person name="Meyer F."/>
            <person name="Moeckel B."/>
            <person name="Pfefferle W."/>
            <person name="Puehler A."/>
            <person name="Rey D.A."/>
            <person name="Rueckert C."/>
            <person name="Rupp O."/>
            <person name="Sahm H."/>
            <person name="Wendisch V.F."/>
            <person name="Wiegraebe I."/>
            <person name="Tauch A."/>
        </authorList>
    </citation>
    <scope>NUCLEOTIDE SEQUENCE [LARGE SCALE GENOMIC DNA]</scope>
    <source>
        <strain>ATCC 13032 / DSM 20300 / JCM 1318 / BCRC 11384 / CCUG 27702 / LMG 3730 / NBRC 12168 / NCIMB 10025 / NRRL B-2784 / 534</strain>
    </source>
</reference>
<reference key="3">
    <citation type="journal article" date="2003" name="J. Biol. Chem.">
        <title>Purification of a cytochrome bc1-aa3 supercomplex with quinol oxidase activity from Corynebacterium glutamicum. Identification of a fourth subunity of cytochrome aa3 oxidase and mutational analysis of diheme cytochrome c1.</title>
        <authorList>
            <person name="Niebisch A."/>
            <person name="Bott M."/>
        </authorList>
    </citation>
    <scope>DETECTION IN A SUPERCOMPLEX WITH CYTOCHROME BC1-AA3</scope>
    <source>
        <strain>ATCC 13032 / DSM 20300 / JCM 1318 / BCRC 11384 / CCUG 27702 / LMG 3730 / NBRC 12168 / NCIMB 10025 / NRRL B-2784 / 534</strain>
    </source>
</reference>
<gene>
    <name type="ordered locus">Cgl2017</name>
    <name type="ordered locus">cg2211</name>
</gene>
<dbReference type="EMBL" id="BA000036">
    <property type="protein sequence ID" value="BAB99410.1"/>
    <property type="molecule type" value="Genomic_DNA"/>
</dbReference>
<dbReference type="EMBL" id="BX927154">
    <property type="protein sequence ID" value="CAF20357.1"/>
    <property type="molecule type" value="Genomic_DNA"/>
</dbReference>
<dbReference type="RefSeq" id="NP_601222.1">
    <property type="nucleotide sequence ID" value="NC_003450.3"/>
</dbReference>
<dbReference type="RefSeq" id="WP_003857542.1">
    <property type="nucleotide sequence ID" value="NC_006958.1"/>
</dbReference>
<dbReference type="PDB" id="7Q21">
    <property type="method" value="EM"/>
    <property type="resolution" value="3.00 A"/>
    <property type="chains" value="H/h=1-147"/>
</dbReference>
<dbReference type="PDB" id="7QHM">
    <property type="method" value="EM"/>
    <property type="resolution" value="2.80 A"/>
    <property type="chains" value="I/V=1-147"/>
</dbReference>
<dbReference type="PDB" id="7QHO">
    <property type="method" value="EM"/>
    <property type="resolution" value="3.10 A"/>
    <property type="chains" value="I/V=1-147"/>
</dbReference>
<dbReference type="PDBsum" id="7Q21"/>
<dbReference type="PDBsum" id="7QHM"/>
<dbReference type="PDBsum" id="7QHO"/>
<dbReference type="EMDB" id="EMD-13777"/>
<dbReference type="EMDB" id="EMD-13976"/>
<dbReference type="EMDB" id="EMD-13977"/>
<dbReference type="SMR" id="Q8NP09"/>
<dbReference type="STRING" id="196627.cg2211"/>
<dbReference type="KEGG" id="cgb:cg2211"/>
<dbReference type="KEGG" id="cgl:Cgl2017"/>
<dbReference type="PATRIC" id="fig|196627.13.peg.1955"/>
<dbReference type="eggNOG" id="ENOG5033KSB">
    <property type="taxonomic scope" value="Bacteria"/>
</dbReference>
<dbReference type="HOGENOM" id="CLU_127546_0_0_11"/>
<dbReference type="OrthoDB" id="3401220at2"/>
<dbReference type="BioCyc" id="CORYNE:G18NG-11609-MONOMER"/>
<dbReference type="Proteomes" id="UP000000582">
    <property type="component" value="Chromosome"/>
</dbReference>
<dbReference type="Proteomes" id="UP000001009">
    <property type="component" value="Chromosome"/>
</dbReference>
<dbReference type="GO" id="GO:0005886">
    <property type="term" value="C:plasma membrane"/>
    <property type="evidence" value="ECO:0007669"/>
    <property type="project" value="UniProtKB-SubCell"/>
</dbReference>
<dbReference type="InterPro" id="IPR024341">
    <property type="entry name" value="DUF2631"/>
</dbReference>
<dbReference type="Pfam" id="PF10939">
    <property type="entry name" value="DUF2631"/>
    <property type="match status" value="1"/>
</dbReference>
<accession>Q8NP09</accession>
<accession>Q6M430</accession>
<comment type="subunit">
    <text>Has been detected in a cytochrome bc1-aa3 supercomplex; its deletion however leaves complex activity unaffected.</text>
</comment>
<comment type="subcellular location">
    <subcellularLocation>
        <location evidence="2">Cell membrane</location>
        <topology evidence="2">Multi-pass membrane protein</topology>
    </subcellularLocation>
</comment>
<sequence>MAGSSHTIEPEIYRGVSTLDEPSAAWGWHGLKRNTIQLAGWISVLFMLGYNFGNHKGHVETIWLLVITALLVIGLLIHLFEPKLSQVRTITSRNKPVGHVEPDWTYDQATLTGTWGNLTDSQLRSVNIEPSRVAHLRAADSAKELDN</sequence>
<keyword id="KW-0002">3D-structure</keyword>
<keyword id="KW-1003">Cell membrane</keyword>
<keyword id="KW-0472">Membrane</keyword>
<keyword id="KW-1185">Reference proteome</keyword>
<keyword id="KW-0812">Transmembrane</keyword>
<keyword id="KW-1133">Transmembrane helix</keyword>
<organism>
    <name type="scientific">Corynebacterium glutamicum (strain ATCC 13032 / DSM 20300 / JCM 1318 / BCRC 11384 / CCUG 27702 / LMG 3730 / NBRC 12168 / NCIMB 10025 / NRRL B-2784 / 534)</name>
    <dbReference type="NCBI Taxonomy" id="196627"/>
    <lineage>
        <taxon>Bacteria</taxon>
        <taxon>Bacillati</taxon>
        <taxon>Actinomycetota</taxon>
        <taxon>Actinomycetes</taxon>
        <taxon>Mycobacteriales</taxon>
        <taxon>Corynebacteriaceae</taxon>
        <taxon>Corynebacterium</taxon>
    </lineage>
</organism>
<proteinExistence type="evidence at protein level"/>